<reference key="1">
    <citation type="journal article" date="2012" name="Biochem. Pharmacol.">
        <title>Cloning and activity of a novel alpha-latrotoxin from red-back spider venom.</title>
        <authorList>
            <person name="Graudins A."/>
            <person name="Little M.J."/>
            <person name="Pineda S.S."/>
            <person name="Hains P.G."/>
            <person name="King G.F."/>
            <person name="Broady K.W."/>
            <person name="Nicholson G.M."/>
        </authorList>
    </citation>
    <scope>PROTEIN SEQUENCE</scope>
    <scope>IDENTIFICATION BY MASS SPECTROMETRY</scope>
    <scope>SUBCELLULAR LOCATION</scope>
    <source>
        <tissue>Venom</tissue>
    </source>
</reference>
<dbReference type="SMR" id="P0DJE5"/>
<dbReference type="GO" id="GO:0005576">
    <property type="term" value="C:extracellular region"/>
    <property type="evidence" value="ECO:0007669"/>
    <property type="project" value="UniProtKB-SubCell"/>
</dbReference>
<dbReference type="GO" id="GO:0044231">
    <property type="term" value="C:host cell presynaptic membrane"/>
    <property type="evidence" value="ECO:0007669"/>
    <property type="project" value="UniProtKB-KW"/>
</dbReference>
<dbReference type="GO" id="GO:0016020">
    <property type="term" value="C:membrane"/>
    <property type="evidence" value="ECO:0007669"/>
    <property type="project" value="UniProtKB-KW"/>
</dbReference>
<dbReference type="GO" id="GO:0044218">
    <property type="term" value="C:other organism cell membrane"/>
    <property type="evidence" value="ECO:0007669"/>
    <property type="project" value="UniProtKB-KW"/>
</dbReference>
<dbReference type="GO" id="GO:0090729">
    <property type="term" value="F:toxin activity"/>
    <property type="evidence" value="ECO:0007669"/>
    <property type="project" value="UniProtKB-KW"/>
</dbReference>
<dbReference type="GO" id="GO:0006887">
    <property type="term" value="P:exocytosis"/>
    <property type="evidence" value="ECO:0007669"/>
    <property type="project" value="UniProtKB-KW"/>
</dbReference>
<dbReference type="Gene3D" id="1.25.40.20">
    <property type="entry name" value="Ankyrin repeat-containing domain"/>
    <property type="match status" value="1"/>
</dbReference>
<dbReference type="InterPro" id="IPR002110">
    <property type="entry name" value="Ankyrin_rpt"/>
</dbReference>
<dbReference type="InterPro" id="IPR036770">
    <property type="entry name" value="Ankyrin_rpt-contain_sf"/>
</dbReference>
<dbReference type="InterPro" id="IPR051165">
    <property type="entry name" value="Multifunctional_ANK_Repeat"/>
</dbReference>
<dbReference type="PANTHER" id="PTHR24123">
    <property type="entry name" value="ANKYRIN REPEAT-CONTAINING"/>
    <property type="match status" value="1"/>
</dbReference>
<dbReference type="PANTHER" id="PTHR24123:SF33">
    <property type="entry name" value="PROTEIN HOS4"/>
    <property type="match status" value="1"/>
</dbReference>
<dbReference type="Pfam" id="PF12796">
    <property type="entry name" value="Ank_2"/>
    <property type="match status" value="1"/>
</dbReference>
<dbReference type="SUPFAM" id="SSF48403">
    <property type="entry name" value="Ankyrin repeat"/>
    <property type="match status" value="1"/>
</dbReference>
<dbReference type="PROSITE" id="PS50297">
    <property type="entry name" value="ANK_REP_REGION"/>
    <property type="match status" value="1"/>
</dbReference>
<dbReference type="PROSITE" id="PS50088">
    <property type="entry name" value="ANK_REPEAT"/>
    <property type="match status" value="1"/>
</dbReference>
<evidence type="ECO:0000250" key="1">
    <source>
        <dbReference type="UniProtKB" id="P23631"/>
    </source>
</evidence>
<evidence type="ECO:0000250" key="2">
    <source>
        <dbReference type="UniProtKB" id="Q02989"/>
    </source>
</evidence>
<evidence type="ECO:0000250" key="3">
    <source>
        <dbReference type="UniProtKB" id="Q25338"/>
    </source>
</evidence>
<evidence type="ECO:0000250" key="4">
    <source>
        <dbReference type="UniProtKB" id="Q9XZC0"/>
    </source>
</evidence>
<evidence type="ECO:0000255" key="5"/>
<evidence type="ECO:0000269" key="6">
    <source>
    </source>
</evidence>
<evidence type="ECO:0000303" key="7">
    <source>
    </source>
</evidence>
<evidence type="ECO:0000305" key="8"/>
<evidence type="ECO:0000305" key="9">
    <source>
    </source>
</evidence>
<keyword id="KW-0040">ANK repeat</keyword>
<keyword id="KW-0165">Cleavage on pair of basic residues</keyword>
<keyword id="KW-0903">Direct protein sequencing</keyword>
<keyword id="KW-0268">Exocytosis</keyword>
<keyword id="KW-0472">Membrane</keyword>
<keyword id="KW-0528">Neurotoxin</keyword>
<keyword id="KW-0638">Presynaptic neurotoxin</keyword>
<keyword id="KW-0677">Repeat</keyword>
<keyword id="KW-0964">Secreted</keyword>
<keyword id="KW-1052">Target cell membrane</keyword>
<keyword id="KW-1053">Target membrane</keyword>
<keyword id="KW-0800">Toxin</keyword>
<keyword id="KW-0812">Transmembrane</keyword>
<sequence length="151" mass="16680">LVIETIENIATKLSISISFKTDVTQTLIDITEIDLNAQDKILIRNTNAVINIKSKVGLTPLHLATLQNNLSVSKGAYLNDGDANGMTPLHYAAMTGNLEMVDFLKWTPLHLAILFKQLVIELLAKTFFDLAIENGRLNIVAFAVEKYIAAR</sequence>
<accession>P0DJE5</accession>
<protein>
    <recommendedName>
        <fullName evidence="8">Alpha-latroinsectotoxin-Lh1a</fullName>
        <shortName evidence="8">Alpha-LIT-Lh1a</shortName>
    </recommendedName>
    <alternativeName>
        <fullName evidence="7">Alpha-latroinsectotoxin</fullName>
        <shortName evidence="7">Alpha-LIT</shortName>
    </alternativeName>
</protein>
<name>LITA_LATHA</name>
<comment type="function">
    <text evidence="1 2 3">Insecticidal presynaptic neurotoxin that induces massive neurotransmitter release at insect (but not vertebrate) neuromuscular junctions. Native toxin forms cation-permeable pores (with high permeability to calcium) in lipid membranes locust muscle membrane and artificial lipid bilayers (By similarity). May bind to insect neurexin-1 homolog, insect adhesion G protein-coupled receptor L1 homolog, and insect receptor-type tyrosine-protein phosphatase S homolog, and induces neurotransmitter exocytosis both by forming tetrameric pores in membranes and signaling via G protein-coupled receptor (By similarity). Oligomerization is a process independent of divalent cations (By similarity). The toxin forms channels with 0.55-0.58 nm entrance diameter and a relatively small conductance in planar phospholipid membranes (By similarity).</text>
</comment>
<comment type="subunit">
    <text evidence="2">Homotetramer in membranes.</text>
</comment>
<comment type="subcellular location">
    <subcellularLocation>
        <location evidence="6">Secreted</location>
    </subcellularLocation>
    <subcellularLocation>
        <location evidence="3">Target cell membrane</location>
    </subcellularLocation>
    <text evidence="3">Forms a membrane channel in the prey.</text>
</comment>
<comment type="tissue specificity">
    <text evidence="9">Expressed by the venom gland.</text>
</comment>
<comment type="domain">
    <text evidence="4">The H8 helix is predicted to insert into membranes and form pores by assembling into tetramers. The helix is contained within a helical bundle domain that undergoes significant conformational changes during pore formation to allow exposure of the H8 transmembrane helix and transition of the toxin from a soluble monomer to a transmembrane tetramer.</text>
</comment>
<comment type="miscellaneous">
    <text>Iso and Leu residues are assigned by comparison with orthologs.</text>
</comment>
<comment type="similarity">
    <text evidence="8">Belongs to the cationic peptide 01 (latrotoxin) family. 02 (alpha-latroinsectotoxin) subfamily.</text>
</comment>
<proteinExistence type="evidence at protein level"/>
<feature type="chain" id="PRO_0000415934" description="Alpha-latroinsectotoxin-Lh1a">
    <location>
        <begin position="1" status="less than"/>
        <end position="151" status="greater than"/>
    </location>
</feature>
<feature type="repeat" description="ANK 1" evidence="5 8">
    <location>
        <begin position="21" status="less than"/>
        <end position="37"/>
    </location>
</feature>
<feature type="repeat" description="ANK 2" evidence="5 8">
    <location>
        <begin position="41" status="less than"/>
        <end position="52"/>
    </location>
</feature>
<feature type="repeat" description="ANK 3" evidence="5 8">
    <location>
        <begin position="56"/>
        <end position="80"/>
    </location>
</feature>
<feature type="repeat" description="ANK 4" evidence="5 8">
    <location>
        <begin position="84"/>
        <end position="104" status="greater than"/>
    </location>
</feature>
<feature type="repeat" description="ANK 5" evidence="5 8">
    <location>
        <begin position="105" status="less than"/>
        <end position="116" status="greater than"/>
    </location>
</feature>
<feature type="repeat" description="ANK 6" evidence="5 8">
    <location>
        <begin position="117" status="less than"/>
        <end position="125" status="greater than"/>
    </location>
</feature>
<feature type="repeat" description="ANK 7" evidence="5 8">
    <location>
        <begin position="126" status="less than"/>
        <end position="146" status="greater than"/>
    </location>
</feature>
<feature type="repeat" description="ANK 8" evidence="5 8">
    <location>
        <begin position="147" status="less than"/>
        <end position="151" status="greater than"/>
    </location>
</feature>
<feature type="non-consecutive residues" evidence="8">
    <location>
        <begin position="12"/>
        <end position="13"/>
    </location>
</feature>
<feature type="non-consecutive residues" evidence="8">
    <location>
        <begin position="20"/>
        <end position="21"/>
    </location>
</feature>
<feature type="non-consecutive residues" evidence="8">
    <location>
        <begin position="40"/>
        <end position="41"/>
    </location>
</feature>
<feature type="non-consecutive residues" evidence="8">
    <location>
        <begin position="74"/>
        <end position="75"/>
    </location>
</feature>
<feature type="non-consecutive residues" evidence="8">
    <location>
        <begin position="104"/>
        <end position="105"/>
    </location>
</feature>
<feature type="non-consecutive residues" evidence="8">
    <location>
        <begin position="116"/>
        <end position="117"/>
    </location>
</feature>
<feature type="non-consecutive residues" evidence="8">
    <location>
        <begin position="125"/>
        <end position="126"/>
    </location>
</feature>
<feature type="non-consecutive residues" evidence="8">
    <location>
        <begin position="146"/>
        <end position="147"/>
    </location>
</feature>
<feature type="non-terminal residue">
    <location>
        <position position="1"/>
    </location>
</feature>
<feature type="non-terminal residue">
    <location>
        <position position="151"/>
    </location>
</feature>
<organism>
    <name type="scientific">Latrodectus hasselti</name>
    <name type="common">Redback spider</name>
    <dbReference type="NCBI Taxonomy" id="256736"/>
    <lineage>
        <taxon>Eukaryota</taxon>
        <taxon>Metazoa</taxon>
        <taxon>Ecdysozoa</taxon>
        <taxon>Arthropoda</taxon>
        <taxon>Chelicerata</taxon>
        <taxon>Arachnida</taxon>
        <taxon>Araneae</taxon>
        <taxon>Araneomorphae</taxon>
        <taxon>Entelegynae</taxon>
        <taxon>Araneoidea</taxon>
        <taxon>Theridiidae</taxon>
        <taxon>Latrodectus</taxon>
    </lineage>
</organism>